<proteinExistence type="inferred from homology"/>
<reference key="1">
    <citation type="submission" date="2009-04" db="EMBL/GenBank/DDBJ databases">
        <title>Genome sequence of Bacillus anthracis A0248.</title>
        <authorList>
            <person name="Dodson R.J."/>
            <person name="Munk A.C."/>
            <person name="Bruce D."/>
            <person name="Detter C."/>
            <person name="Tapia R."/>
            <person name="Sutton G."/>
            <person name="Sims D."/>
            <person name="Brettin T."/>
        </authorList>
    </citation>
    <scope>NUCLEOTIDE SEQUENCE [LARGE SCALE GENOMIC DNA]</scope>
    <source>
        <strain>A0248</strain>
    </source>
</reference>
<sequence length="874" mass="99265">MSIPSILRKETLKKKDKNIDLQENNINDLVVSASRVIAPLWPISTFAAHHPWMGLEKQSFEQVANWLKEARNVDIYPSASMIHSAKAKGEIEESFLQIALSRWLDSQSFHMPRETAERFCQEALKLERLPSSLLSSPELNKLAEEINYVNTGSMKDSSMQPISSLIENQNGDNLSDILNYHIIKWCKLYLDDAGASWAMPNREKGFYRAWQHLITFDPALSKTERKVLKDWPEDALIALTKALSELGISESNMQAYLEGHLLSLPGWAGMIRWRSQQSIEEQELLIEYLAVRLSMELAIVKPYLPLKNQKVEKKVSIVPLIASWIYWGDISIEKWLQMSATEQSELLAFAYRFDENTRKKLWLEAWEQTHAEQLREKIASKQRATHDKKRVVAQLAFCIDVRSEPFRRHLEKLGPFETFGIAGFFGLPIATTELGSNDSHPSLPVILKPKHQIKELTDENECKSYEQRKMVGSSVRYTFKTMKQNVLTSMLLPEVSGPLLGLQMVTRSFVPRRVGGFIRNLRKNMLQKPDTTFSLNHVHDTNCEIPIGFTKEEKVNYVRQTLKMVGLTEGFAPLVVMCGHSSQSTNNPYAAALECGACGGAAGGFNARVFATLCNLPEVREALSAEGIKIPDDTIFAAAEHKTTVDELEWIYVPELSETAQEAFDCIEAIMPNVSQHANRERLMQLPHFKTKIKNPSKEAHRFAEDWSEIRPEWGLARNASFIIGQRELTQECDLEGRAFLHNYDWKQDESGDILANIIAGPGTVAQWINLQYYASTVAPHYYGSGNKATQTVTAGLGVMQGNASDLLPGLPWQSVMQSDRETYHSPLRLLIVIQAPTKYIERLLNNNFTFREKVQNGWVRLASVDPEGRWKNW</sequence>
<accession>C3P0Y8</accession>
<organism>
    <name type="scientific">Bacillus anthracis (strain A0248)</name>
    <dbReference type="NCBI Taxonomy" id="592021"/>
    <lineage>
        <taxon>Bacteria</taxon>
        <taxon>Bacillati</taxon>
        <taxon>Bacillota</taxon>
        <taxon>Bacilli</taxon>
        <taxon>Bacillales</taxon>
        <taxon>Bacillaceae</taxon>
        <taxon>Bacillus</taxon>
        <taxon>Bacillus cereus group</taxon>
    </lineage>
</organism>
<gene>
    <name evidence="1" type="primary">dabA</name>
    <name type="ordered locus">BAA_3232</name>
</gene>
<dbReference type="EMBL" id="CP001598">
    <property type="protein sequence ID" value="ACQ46242.1"/>
    <property type="molecule type" value="Genomic_DNA"/>
</dbReference>
<dbReference type="RefSeq" id="WP_000026985.1">
    <property type="nucleotide sequence ID" value="NC_012659.1"/>
</dbReference>
<dbReference type="SMR" id="C3P0Y8"/>
<dbReference type="GeneID" id="45022968"/>
<dbReference type="KEGG" id="bai:BAA_3232"/>
<dbReference type="HOGENOM" id="CLU_009885_0_0_9"/>
<dbReference type="GO" id="GO:0005886">
    <property type="term" value="C:plasma membrane"/>
    <property type="evidence" value="ECO:0007669"/>
    <property type="project" value="UniProtKB-SubCell"/>
</dbReference>
<dbReference type="GO" id="GO:0008270">
    <property type="term" value="F:zinc ion binding"/>
    <property type="evidence" value="ECO:0007669"/>
    <property type="project" value="UniProtKB-UniRule"/>
</dbReference>
<dbReference type="HAMAP" id="MF_01871">
    <property type="entry name" value="DabA"/>
    <property type="match status" value="1"/>
</dbReference>
<dbReference type="InterPro" id="IPR018752">
    <property type="entry name" value="DabA"/>
</dbReference>
<dbReference type="PANTHER" id="PTHR38344:SF1">
    <property type="entry name" value="INORGANIC CARBON TRANSPORTER SUBUNIT DABA-RELATED"/>
    <property type="match status" value="1"/>
</dbReference>
<dbReference type="PANTHER" id="PTHR38344">
    <property type="entry name" value="UPF0753 PROTEIN AQ_863"/>
    <property type="match status" value="1"/>
</dbReference>
<dbReference type="Pfam" id="PF10070">
    <property type="entry name" value="DabA"/>
    <property type="match status" value="1"/>
</dbReference>
<comment type="function">
    <text evidence="1">Part of an energy-coupled inorganic carbon pump.</text>
</comment>
<comment type="cofactor">
    <cofactor evidence="1">
        <name>Zn(2+)</name>
        <dbReference type="ChEBI" id="CHEBI:29105"/>
    </cofactor>
</comment>
<comment type="subunit">
    <text evidence="1">Forms a complex with DabB.</text>
</comment>
<comment type="subcellular location">
    <subcellularLocation>
        <location evidence="1">Cell membrane</location>
        <topology evidence="1">Peripheral membrane protein</topology>
    </subcellularLocation>
</comment>
<comment type="similarity">
    <text evidence="1">Belongs to the inorganic carbon transporter (TC 9.A.2) DabA family.</text>
</comment>
<protein>
    <recommendedName>
        <fullName evidence="1">Probable inorganic carbon transporter subunit DabA</fullName>
    </recommendedName>
</protein>
<keyword id="KW-1003">Cell membrane</keyword>
<keyword id="KW-0472">Membrane</keyword>
<keyword id="KW-0479">Metal-binding</keyword>
<keyword id="KW-0813">Transport</keyword>
<keyword id="KW-0862">Zinc</keyword>
<name>DABA_BACAA</name>
<feature type="chain" id="PRO_0000387235" description="Probable inorganic carbon transporter subunit DabA">
    <location>
        <begin position="1"/>
        <end position="874"/>
    </location>
</feature>
<feature type="binding site" evidence="1">
    <location>
        <position position="398"/>
    </location>
    <ligand>
        <name>Zn(2+)</name>
        <dbReference type="ChEBI" id="CHEBI:29105"/>
    </ligand>
</feature>
<feature type="binding site" evidence="1">
    <location>
        <position position="400"/>
    </location>
    <ligand>
        <name>Zn(2+)</name>
        <dbReference type="ChEBI" id="CHEBI:29105"/>
    </ligand>
</feature>
<feature type="binding site" evidence="1">
    <location>
        <position position="580"/>
    </location>
    <ligand>
        <name>Zn(2+)</name>
        <dbReference type="ChEBI" id="CHEBI:29105"/>
    </ligand>
</feature>
<feature type="binding site" evidence="1">
    <location>
        <position position="595"/>
    </location>
    <ligand>
        <name>Zn(2+)</name>
        <dbReference type="ChEBI" id="CHEBI:29105"/>
    </ligand>
</feature>
<evidence type="ECO:0000255" key="1">
    <source>
        <dbReference type="HAMAP-Rule" id="MF_01871"/>
    </source>
</evidence>